<evidence type="ECO:0000255" key="1">
    <source>
        <dbReference type="HAMAP-Rule" id="MF_00073"/>
    </source>
</evidence>
<comment type="function">
    <text evidence="1">Involved in transcription antitermination. Required for transcription of ribosomal RNA (rRNA) genes. Binds specifically to the boxA antiterminator sequence of the ribosomal RNA (rrn) operons.</text>
</comment>
<comment type="similarity">
    <text evidence="1">Belongs to the NusB family.</text>
</comment>
<gene>
    <name evidence="1" type="primary">nusB</name>
    <name type="ordered locus">NIS_1360</name>
</gene>
<feature type="chain" id="PRO_1000023756" description="Transcription antitermination protein NusB">
    <location>
        <begin position="1"/>
        <end position="139"/>
    </location>
</feature>
<name>NUSB_NITSB</name>
<keyword id="KW-1185">Reference proteome</keyword>
<keyword id="KW-0694">RNA-binding</keyword>
<keyword id="KW-0804">Transcription</keyword>
<keyword id="KW-0889">Transcription antitermination</keyword>
<keyword id="KW-0805">Transcription regulation</keyword>
<protein>
    <recommendedName>
        <fullName evidence="1">Transcription antitermination protein NusB</fullName>
    </recommendedName>
    <alternativeName>
        <fullName evidence="1">Antitermination factor NusB</fullName>
    </alternativeName>
</protein>
<proteinExistence type="inferred from homology"/>
<reference key="1">
    <citation type="journal article" date="2007" name="Proc. Natl. Acad. Sci. U.S.A.">
        <title>Deep-sea vent epsilon-proteobacterial genomes provide insights into emergence of pathogens.</title>
        <authorList>
            <person name="Nakagawa S."/>
            <person name="Takaki Y."/>
            <person name="Shimamura S."/>
            <person name="Reysenbach A.-L."/>
            <person name="Takai K."/>
            <person name="Horikoshi K."/>
        </authorList>
    </citation>
    <scope>NUCLEOTIDE SEQUENCE [LARGE SCALE GENOMIC DNA]</scope>
    <source>
        <strain>SB155-2</strain>
    </source>
</reference>
<sequence>MATRHQAREAVIGLLYAYDLGNPEIKKFAEDILEEKKIRNKQREFALALFKGTVEHLDTIDEMIKKHLESWDMERVGHIERAILRLGVYELFYTDLDPAIVINEAVELAKKLGTDQSPKFINGVLDAIAKEVKNGSQKA</sequence>
<accession>A6Q4Q9</accession>
<dbReference type="EMBL" id="AP009178">
    <property type="protein sequence ID" value="BAF70468.1"/>
    <property type="molecule type" value="Genomic_DNA"/>
</dbReference>
<dbReference type="RefSeq" id="WP_012082731.1">
    <property type="nucleotide sequence ID" value="NC_009662.1"/>
</dbReference>
<dbReference type="SMR" id="A6Q4Q9"/>
<dbReference type="FunCoup" id="A6Q4Q9">
    <property type="interactions" value="309"/>
</dbReference>
<dbReference type="STRING" id="387092.NIS_1360"/>
<dbReference type="KEGG" id="nis:NIS_1360"/>
<dbReference type="eggNOG" id="COG0781">
    <property type="taxonomic scope" value="Bacteria"/>
</dbReference>
<dbReference type="HOGENOM" id="CLU_087843_3_3_7"/>
<dbReference type="InParanoid" id="A6Q4Q9"/>
<dbReference type="OrthoDB" id="9797817at2"/>
<dbReference type="Proteomes" id="UP000001118">
    <property type="component" value="Chromosome"/>
</dbReference>
<dbReference type="GO" id="GO:0005829">
    <property type="term" value="C:cytosol"/>
    <property type="evidence" value="ECO:0007669"/>
    <property type="project" value="TreeGrafter"/>
</dbReference>
<dbReference type="GO" id="GO:0003723">
    <property type="term" value="F:RNA binding"/>
    <property type="evidence" value="ECO:0007669"/>
    <property type="project" value="UniProtKB-UniRule"/>
</dbReference>
<dbReference type="GO" id="GO:0006353">
    <property type="term" value="P:DNA-templated transcription termination"/>
    <property type="evidence" value="ECO:0007669"/>
    <property type="project" value="UniProtKB-UniRule"/>
</dbReference>
<dbReference type="GO" id="GO:0031564">
    <property type="term" value="P:transcription antitermination"/>
    <property type="evidence" value="ECO:0007669"/>
    <property type="project" value="UniProtKB-KW"/>
</dbReference>
<dbReference type="CDD" id="cd00619">
    <property type="entry name" value="Terminator_NusB"/>
    <property type="match status" value="1"/>
</dbReference>
<dbReference type="Gene3D" id="1.10.940.10">
    <property type="entry name" value="NusB-like"/>
    <property type="match status" value="1"/>
</dbReference>
<dbReference type="HAMAP" id="MF_00073">
    <property type="entry name" value="NusB"/>
    <property type="match status" value="1"/>
</dbReference>
<dbReference type="InterPro" id="IPR035926">
    <property type="entry name" value="NusB-like_sf"/>
</dbReference>
<dbReference type="InterPro" id="IPR011605">
    <property type="entry name" value="NusB_fam"/>
</dbReference>
<dbReference type="InterPro" id="IPR006027">
    <property type="entry name" value="NusB_RsmB_TIM44"/>
</dbReference>
<dbReference type="NCBIfam" id="TIGR01951">
    <property type="entry name" value="nusB"/>
    <property type="match status" value="1"/>
</dbReference>
<dbReference type="PANTHER" id="PTHR11078:SF3">
    <property type="entry name" value="ANTITERMINATION NUSB DOMAIN-CONTAINING PROTEIN"/>
    <property type="match status" value="1"/>
</dbReference>
<dbReference type="PANTHER" id="PTHR11078">
    <property type="entry name" value="N UTILIZATION SUBSTANCE PROTEIN B-RELATED"/>
    <property type="match status" value="1"/>
</dbReference>
<dbReference type="Pfam" id="PF01029">
    <property type="entry name" value="NusB"/>
    <property type="match status" value="1"/>
</dbReference>
<dbReference type="SUPFAM" id="SSF48013">
    <property type="entry name" value="NusB-like"/>
    <property type="match status" value="1"/>
</dbReference>
<organism>
    <name type="scientific">Nitratiruptor sp. (strain SB155-2)</name>
    <dbReference type="NCBI Taxonomy" id="387092"/>
    <lineage>
        <taxon>Bacteria</taxon>
        <taxon>Pseudomonadati</taxon>
        <taxon>Campylobacterota</taxon>
        <taxon>Epsilonproteobacteria</taxon>
        <taxon>Nautiliales</taxon>
        <taxon>Nitratiruptoraceae</taxon>
        <taxon>Nitratiruptor</taxon>
    </lineage>
</organism>